<organism>
    <name type="scientific">Trichodesmium erythraeum (strain IMS101)</name>
    <dbReference type="NCBI Taxonomy" id="203124"/>
    <lineage>
        <taxon>Bacteria</taxon>
        <taxon>Bacillati</taxon>
        <taxon>Cyanobacteriota</taxon>
        <taxon>Cyanophyceae</taxon>
        <taxon>Oscillatoriophycideae</taxon>
        <taxon>Oscillatoriales</taxon>
        <taxon>Microcoleaceae</taxon>
        <taxon>Trichodesmium</taxon>
    </lineage>
</organism>
<protein>
    <recommendedName>
        <fullName evidence="1">Urease accessory protein UreG</fullName>
    </recommendedName>
</protein>
<name>UREG_TRIEI</name>
<sequence>MTTAARLGIGGPVGSGKTALLECIVPLLTNQGIEVAIVTNDLLTTEDAERLKSGGILPRDRIIGVETGSCPHTAIREDPTMNILAVQDLEQLFPNLNLIMIESGGDNLASTFSYDLVDAYIFVIDVGAGDDIPRKKGPGFMQADLVVINKIDLAPYVNANLNLIRKEASVYRQSKPIAYTNCKTGVGLNEVVNFILERVLFRTALSVKNLEK</sequence>
<dbReference type="EMBL" id="CP000393">
    <property type="protein sequence ID" value="ABG50177.1"/>
    <property type="molecule type" value="Genomic_DNA"/>
</dbReference>
<dbReference type="RefSeq" id="WP_011610570.1">
    <property type="nucleotide sequence ID" value="NC_008312.1"/>
</dbReference>
<dbReference type="SMR" id="Q117Z7"/>
<dbReference type="STRING" id="203124.Tery_0748"/>
<dbReference type="KEGG" id="ter:Tery_0748"/>
<dbReference type="eggNOG" id="COG0378">
    <property type="taxonomic scope" value="Bacteria"/>
</dbReference>
<dbReference type="HOGENOM" id="CLU_072144_1_0_3"/>
<dbReference type="OrthoDB" id="9802035at2"/>
<dbReference type="GO" id="GO:0005737">
    <property type="term" value="C:cytoplasm"/>
    <property type="evidence" value="ECO:0007669"/>
    <property type="project" value="UniProtKB-SubCell"/>
</dbReference>
<dbReference type="GO" id="GO:0005525">
    <property type="term" value="F:GTP binding"/>
    <property type="evidence" value="ECO:0007669"/>
    <property type="project" value="UniProtKB-KW"/>
</dbReference>
<dbReference type="GO" id="GO:0003924">
    <property type="term" value="F:GTPase activity"/>
    <property type="evidence" value="ECO:0007669"/>
    <property type="project" value="InterPro"/>
</dbReference>
<dbReference type="GO" id="GO:0016151">
    <property type="term" value="F:nickel cation binding"/>
    <property type="evidence" value="ECO:0007669"/>
    <property type="project" value="UniProtKB-UniRule"/>
</dbReference>
<dbReference type="GO" id="GO:0043419">
    <property type="term" value="P:urea catabolic process"/>
    <property type="evidence" value="ECO:0007669"/>
    <property type="project" value="InterPro"/>
</dbReference>
<dbReference type="Gene3D" id="3.40.50.300">
    <property type="entry name" value="P-loop containing nucleotide triphosphate hydrolases"/>
    <property type="match status" value="1"/>
</dbReference>
<dbReference type="HAMAP" id="MF_01389">
    <property type="entry name" value="UreG"/>
    <property type="match status" value="1"/>
</dbReference>
<dbReference type="InterPro" id="IPR003495">
    <property type="entry name" value="CobW/HypB/UreG_nucleotide-bd"/>
</dbReference>
<dbReference type="InterPro" id="IPR027417">
    <property type="entry name" value="P-loop_NTPase"/>
</dbReference>
<dbReference type="InterPro" id="IPR004400">
    <property type="entry name" value="UreG"/>
</dbReference>
<dbReference type="NCBIfam" id="TIGR00101">
    <property type="entry name" value="ureG"/>
    <property type="match status" value="1"/>
</dbReference>
<dbReference type="PANTHER" id="PTHR31715">
    <property type="entry name" value="UREASE ACCESSORY PROTEIN G"/>
    <property type="match status" value="1"/>
</dbReference>
<dbReference type="PANTHER" id="PTHR31715:SF0">
    <property type="entry name" value="UREASE ACCESSORY PROTEIN G"/>
    <property type="match status" value="1"/>
</dbReference>
<dbReference type="Pfam" id="PF02492">
    <property type="entry name" value="cobW"/>
    <property type="match status" value="1"/>
</dbReference>
<dbReference type="PIRSF" id="PIRSF005624">
    <property type="entry name" value="Ni-bind_GTPase"/>
    <property type="match status" value="1"/>
</dbReference>
<dbReference type="SUPFAM" id="SSF52540">
    <property type="entry name" value="P-loop containing nucleoside triphosphate hydrolases"/>
    <property type="match status" value="1"/>
</dbReference>
<accession>Q117Z7</accession>
<reference key="1">
    <citation type="journal article" date="2015" name="Proc. Natl. Acad. Sci. U.S.A.">
        <title>Trichodesmium genome maintains abundant, widespread noncoding DNA in situ, despite oligotrophic lifestyle.</title>
        <authorList>
            <person name="Walworth N."/>
            <person name="Pfreundt U."/>
            <person name="Nelson W.C."/>
            <person name="Mincer T."/>
            <person name="Heidelberg J.F."/>
            <person name="Fu F."/>
            <person name="Waterbury J.B."/>
            <person name="Glavina del Rio T."/>
            <person name="Goodwin L."/>
            <person name="Kyrpides N.C."/>
            <person name="Land M.L."/>
            <person name="Woyke T."/>
            <person name="Hutchins D.A."/>
            <person name="Hess W.R."/>
            <person name="Webb E.A."/>
        </authorList>
    </citation>
    <scope>NUCLEOTIDE SEQUENCE [LARGE SCALE GENOMIC DNA]</scope>
    <source>
        <strain>IMS101</strain>
    </source>
</reference>
<gene>
    <name evidence="1" type="primary">ureG</name>
    <name type="ordered locus">Tery_0748</name>
</gene>
<evidence type="ECO:0000255" key="1">
    <source>
        <dbReference type="HAMAP-Rule" id="MF_01389"/>
    </source>
</evidence>
<proteinExistence type="inferred from homology"/>
<keyword id="KW-0143">Chaperone</keyword>
<keyword id="KW-0963">Cytoplasm</keyword>
<keyword id="KW-0342">GTP-binding</keyword>
<keyword id="KW-0996">Nickel insertion</keyword>
<keyword id="KW-0547">Nucleotide-binding</keyword>
<comment type="function">
    <text evidence="1">Facilitates the functional incorporation of the urease nickel metallocenter. This process requires GTP hydrolysis, probably effectuated by UreG.</text>
</comment>
<comment type="subunit">
    <text evidence="1">Homodimer. UreD, UreF and UreG form a complex that acts as a GTP-hydrolysis-dependent molecular chaperone, activating the urease apoprotein by helping to assemble the nickel containing metallocenter of UreC. The UreE protein probably delivers the nickel.</text>
</comment>
<comment type="subcellular location">
    <subcellularLocation>
        <location evidence="1">Cytoplasm</location>
    </subcellularLocation>
</comment>
<comment type="similarity">
    <text evidence="1">Belongs to the SIMIBI class G3E GTPase family. UreG subfamily.</text>
</comment>
<feature type="chain" id="PRO_1000145246" description="Urease accessory protein UreG">
    <location>
        <begin position="1"/>
        <end position="212"/>
    </location>
</feature>
<feature type="binding site" evidence="1">
    <location>
        <begin position="11"/>
        <end position="18"/>
    </location>
    <ligand>
        <name>GTP</name>
        <dbReference type="ChEBI" id="CHEBI:37565"/>
    </ligand>
</feature>